<sequence>MELSLVVFTVVCWVSVWSDDRIISDRHAVYWNSSNSRFWQGEYTVAVSINDYLDVYCPYYESPQPHSRMERYILFMVNHDGYLTCEHRMRGFKRWECNRPQSPDGPLRFSEKFQLFTPFSLGFEFRPGHEYYYISSPHPNHAGKPCLKLKVYVKPTSSGYESPEPFLTDQSQRCGADGPCLAVLMLLLVFLLAGV</sequence>
<proteinExistence type="evidence at protein level"/>
<feature type="signal peptide" evidence="2">
    <location>
        <begin position="1"/>
        <end position="16"/>
    </location>
</feature>
<feature type="chain" id="PRO_0000008367" description="Ephrin-A2">
    <location>
        <begin position="17"/>
        <end position="174"/>
    </location>
</feature>
<feature type="propeptide" id="PRO_0000008368" description="Removed in mature form" evidence="2">
    <location>
        <begin position="175"/>
        <end position="195"/>
    </location>
</feature>
<feature type="domain" description="Ephrin RBD" evidence="3">
    <location>
        <begin position="24"/>
        <end position="157"/>
    </location>
</feature>
<feature type="lipid moiety-binding region" description="GPI-anchor amidated cysteine" evidence="2">
    <location>
        <position position="174"/>
    </location>
</feature>
<feature type="glycosylation site" description="N-linked (GlcNAc...) asparagine" evidence="2">
    <location>
        <position position="32"/>
    </location>
</feature>
<feature type="disulfide bond" evidence="3">
    <location>
        <begin position="57"/>
        <end position="97"/>
    </location>
</feature>
<feature type="disulfide bond" evidence="3">
    <location>
        <begin position="85"/>
        <end position="146"/>
    </location>
</feature>
<name>EFNA2_DANRE</name>
<dbReference type="EMBL" id="Y09668">
    <property type="protein sequence ID" value="CAA70863.1"/>
    <property type="molecule type" value="mRNA"/>
</dbReference>
<dbReference type="EMBL" id="BC096783">
    <property type="protein sequence ID" value="AAH96783.1"/>
    <property type="molecule type" value="mRNA"/>
</dbReference>
<dbReference type="RefSeq" id="NP_571097.1">
    <property type="nucleotide sequence ID" value="NM_131022.2"/>
</dbReference>
<dbReference type="SMR" id="P79727"/>
<dbReference type="FunCoup" id="P79727">
    <property type="interactions" value="469"/>
</dbReference>
<dbReference type="IntAct" id="P79727">
    <property type="interactions" value="3"/>
</dbReference>
<dbReference type="STRING" id="7955.ENSDARP00000040277"/>
<dbReference type="GlyCosmos" id="P79727">
    <property type="glycosylation" value="1 site, No reported glycans"/>
</dbReference>
<dbReference type="PaxDb" id="7955-ENSDARP00000040277"/>
<dbReference type="Ensembl" id="ENSDART00000040278">
    <property type="protein sequence ID" value="ENSDARP00000040277"/>
    <property type="gene ID" value="ENSDARG00000031372"/>
</dbReference>
<dbReference type="GeneID" id="30218"/>
<dbReference type="KEGG" id="dre:30218"/>
<dbReference type="AGR" id="ZFIN:ZDB-GENE-990415-66"/>
<dbReference type="CTD" id="30218"/>
<dbReference type="ZFIN" id="ZDB-GENE-990415-66">
    <property type="gene designation" value="efna2a"/>
</dbReference>
<dbReference type="eggNOG" id="KOG3858">
    <property type="taxonomic scope" value="Eukaryota"/>
</dbReference>
<dbReference type="HOGENOM" id="CLU_081598_3_1_1"/>
<dbReference type="InParanoid" id="P79727"/>
<dbReference type="OMA" id="KCVMEVV"/>
<dbReference type="OrthoDB" id="6250301at2759"/>
<dbReference type="PhylomeDB" id="P79727"/>
<dbReference type="Reactome" id="R-DRE-2682334">
    <property type="pathway name" value="EPH-Ephrin signaling"/>
</dbReference>
<dbReference type="Reactome" id="R-DRE-3928663">
    <property type="pathway name" value="EPHA-mediated growth cone collapse"/>
</dbReference>
<dbReference type="Reactome" id="R-DRE-3928665">
    <property type="pathway name" value="EPH-ephrin mediated repulsion of cells"/>
</dbReference>
<dbReference type="PRO" id="PR:P79727"/>
<dbReference type="Proteomes" id="UP000000437">
    <property type="component" value="Chromosome 2"/>
</dbReference>
<dbReference type="Bgee" id="ENSDARG00000031372">
    <property type="expression patterns" value="Expressed in midbrain and 27 other cell types or tissues"/>
</dbReference>
<dbReference type="ExpressionAtlas" id="P79727">
    <property type="expression patterns" value="baseline and differential"/>
</dbReference>
<dbReference type="GO" id="GO:0005886">
    <property type="term" value="C:plasma membrane"/>
    <property type="evidence" value="ECO:0000318"/>
    <property type="project" value="GO_Central"/>
</dbReference>
<dbReference type="GO" id="GO:0098552">
    <property type="term" value="C:side of membrane"/>
    <property type="evidence" value="ECO:0007669"/>
    <property type="project" value="UniProtKB-KW"/>
</dbReference>
<dbReference type="GO" id="GO:0046875">
    <property type="term" value="F:ephrin receptor binding"/>
    <property type="evidence" value="ECO:0000318"/>
    <property type="project" value="GO_Central"/>
</dbReference>
<dbReference type="GO" id="GO:0007411">
    <property type="term" value="P:axon guidance"/>
    <property type="evidence" value="ECO:0000318"/>
    <property type="project" value="GO_Central"/>
</dbReference>
<dbReference type="GO" id="GO:0048013">
    <property type="term" value="P:ephrin receptor signaling pathway"/>
    <property type="evidence" value="ECO:0000250"/>
    <property type="project" value="UniProtKB"/>
</dbReference>
<dbReference type="GO" id="GO:0030316">
    <property type="term" value="P:osteoclast differentiation"/>
    <property type="evidence" value="ECO:0000318"/>
    <property type="project" value="GO_Central"/>
</dbReference>
<dbReference type="CDD" id="cd10425">
    <property type="entry name" value="Ephrin-A_Ectodomain"/>
    <property type="match status" value="1"/>
</dbReference>
<dbReference type="FunFam" id="2.60.40.420:FF:000005">
    <property type="entry name" value="Ephrin A5"/>
    <property type="match status" value="1"/>
</dbReference>
<dbReference type="Gene3D" id="2.60.40.420">
    <property type="entry name" value="Cupredoxins - blue copper proteins"/>
    <property type="match status" value="1"/>
</dbReference>
<dbReference type="InterPro" id="IPR008972">
    <property type="entry name" value="Cupredoxin"/>
</dbReference>
<dbReference type="InterPro" id="IPR031328">
    <property type="entry name" value="Ephrin"/>
</dbReference>
<dbReference type="InterPro" id="IPR034252">
    <property type="entry name" value="Ephrin-A_Ecto"/>
</dbReference>
<dbReference type="InterPro" id="IPR019765">
    <property type="entry name" value="Ephrin_CS"/>
</dbReference>
<dbReference type="InterPro" id="IPR001799">
    <property type="entry name" value="Ephrin_RBD"/>
</dbReference>
<dbReference type="PANTHER" id="PTHR11304">
    <property type="entry name" value="EPHRIN"/>
    <property type="match status" value="1"/>
</dbReference>
<dbReference type="PANTHER" id="PTHR11304:SF69">
    <property type="entry name" value="EPHRIN-A2"/>
    <property type="match status" value="1"/>
</dbReference>
<dbReference type="Pfam" id="PF00812">
    <property type="entry name" value="Ephrin"/>
    <property type="match status" value="1"/>
</dbReference>
<dbReference type="PRINTS" id="PR01347">
    <property type="entry name" value="EPHRIN"/>
</dbReference>
<dbReference type="SUPFAM" id="SSF49503">
    <property type="entry name" value="Cupredoxins"/>
    <property type="match status" value="1"/>
</dbReference>
<dbReference type="PROSITE" id="PS01299">
    <property type="entry name" value="EPHRIN_RBD_1"/>
    <property type="match status" value="1"/>
</dbReference>
<dbReference type="PROSITE" id="PS51551">
    <property type="entry name" value="EPHRIN_RBD_2"/>
    <property type="match status" value="1"/>
</dbReference>
<comment type="function">
    <text evidence="1">Cell surface GPI-bound ligand for Eph receptors, a family of receptor tyrosine kinases which are crucial for migration, repulsion and adhesion during neuronal, vascular and epithelial development. Binds promiscuously Eph receptors residing on adjacent cells, leading to contact-dependent bidirectional signaling into neighboring cells. The signaling pathway downstream of the receptor is referred to as forward signaling while the signaling pathway downstream of the ephrin ligand is referred to as reverse signaling. With the epha2 receptor may play a role in bone remodeling through regulation of osteoclastogenesis and osteoblastogenesis (By similarity).</text>
</comment>
<comment type="subunit">
    <text evidence="1">Binds to the receptor tyrosine kinases epha2, epha3, epha4 and epha5. Interacts with epha8; activates epha8 (By similarity).</text>
</comment>
<comment type="interaction">
    <interactant intactId="EBI-42473106">
        <id>P79727</id>
    </interactant>
    <interactant intactId="EBI-42473062">
        <id>O13146</id>
        <label>epha3</label>
    </interactant>
    <organismsDiffer>false</organismsDiffer>
    <experiments>2</experiments>
</comment>
<comment type="interaction">
    <interactant intactId="EBI-42473106">
        <id>P79727</id>
    </interactant>
    <interactant intactId="EBI-42473157">
        <id>Q5ZEW1</id>
        <label>epha4a</label>
    </interactant>
    <organismsDiffer>false</organismsDiffer>
    <experiments>2</experiments>
</comment>
<comment type="interaction">
    <interactant intactId="EBI-42473106">
        <id>P79727</id>
    </interactant>
    <interactant intactId="EBI-42473126">
        <id>A0A8M9PHF0</id>
        <label>epha7</label>
    </interactant>
    <organismsDiffer>false</organismsDiffer>
    <experiments>2</experiments>
</comment>
<comment type="subcellular location">
    <subcellularLocation>
        <location evidence="4">Cell membrane</location>
        <topology evidence="4">Lipid-anchor</topology>
        <topology evidence="4">GPI-anchor</topology>
    </subcellularLocation>
</comment>
<comment type="tissue specificity">
    <text>Widespread expression in the embryo.</text>
</comment>
<comment type="developmental stage">
    <text>Expressed in the presumptive midbrain of developing embryos from the six-somite stage. By 24 hours, expressed throughout the midbrain including the region of the presumptive tectum. At later stages, expressed in a graded fashion throughout the tectum.</text>
</comment>
<comment type="similarity">
    <text evidence="3">Belongs to the ephrin family.</text>
</comment>
<gene>
    <name type="primary">efna2</name>
    <name type="synonym">eplg6</name>
    <name type="synonym">lerk6</name>
</gene>
<accession>P79727</accession>
<accession>Q4V9Q0</accession>
<protein>
    <recommendedName>
        <fullName>Ephrin-A2</fullName>
    </recommendedName>
    <alternativeName>
        <fullName>ELF-1</fullName>
    </alternativeName>
    <alternativeName>
        <fullName>EPH-related receptor tyrosine kinase ligand 6</fullName>
        <shortName>LERK-6</shortName>
    </alternativeName>
    <alternativeName>
        <fullName>ZfEPHL3</fullName>
    </alternativeName>
</protein>
<evidence type="ECO:0000250" key="1"/>
<evidence type="ECO:0000255" key="2"/>
<evidence type="ECO:0000255" key="3">
    <source>
        <dbReference type="PROSITE-ProRule" id="PRU00884"/>
    </source>
</evidence>
<evidence type="ECO:0000305" key="4"/>
<organism>
    <name type="scientific">Danio rerio</name>
    <name type="common">Zebrafish</name>
    <name type="synonym">Brachydanio rerio</name>
    <dbReference type="NCBI Taxonomy" id="7955"/>
    <lineage>
        <taxon>Eukaryota</taxon>
        <taxon>Metazoa</taxon>
        <taxon>Chordata</taxon>
        <taxon>Craniata</taxon>
        <taxon>Vertebrata</taxon>
        <taxon>Euteleostomi</taxon>
        <taxon>Actinopterygii</taxon>
        <taxon>Neopterygii</taxon>
        <taxon>Teleostei</taxon>
        <taxon>Ostariophysi</taxon>
        <taxon>Cypriniformes</taxon>
        <taxon>Danionidae</taxon>
        <taxon>Danioninae</taxon>
        <taxon>Danio</taxon>
    </lineage>
</organism>
<keyword id="KW-1003">Cell membrane</keyword>
<keyword id="KW-0217">Developmental protein</keyword>
<keyword id="KW-0221">Differentiation</keyword>
<keyword id="KW-1015">Disulfide bond</keyword>
<keyword id="KW-0325">Glycoprotein</keyword>
<keyword id="KW-0336">GPI-anchor</keyword>
<keyword id="KW-0449">Lipoprotein</keyword>
<keyword id="KW-0472">Membrane</keyword>
<keyword id="KW-0524">Neurogenesis</keyword>
<keyword id="KW-1185">Reference proteome</keyword>
<keyword id="KW-0732">Signal</keyword>
<reference key="1">
    <citation type="journal article" date="1997" name="Development">
        <title>Two Eph receptor tyrosine kinase ligands control axon growth and may be involved in the creation of the retinotectal map in the zebrafish.</title>
        <authorList>
            <person name="Brennan C."/>
            <person name="Monschau B."/>
            <person name="Lindberg R."/>
            <person name="Guthrie B."/>
            <person name="Drescher U."/>
            <person name="Bonhoeffer F."/>
            <person name="Holder N."/>
        </authorList>
    </citation>
    <scope>NUCLEOTIDE SEQUENCE [MRNA]</scope>
    <source>
        <tissue>Embryo</tissue>
    </source>
</reference>
<reference key="2">
    <citation type="submission" date="2005-06" db="EMBL/GenBank/DDBJ databases">
        <authorList>
            <consortium name="NIH - Zebrafish Gene Collection (ZGC) project"/>
        </authorList>
    </citation>
    <scope>NUCLEOTIDE SEQUENCE [LARGE SCALE MRNA]</scope>
    <source>
        <tissue>Brain</tissue>
    </source>
</reference>